<dbReference type="EMBL" id="CP000742">
    <property type="protein sequence ID" value="ABR54337.1"/>
    <property type="molecule type" value="Genomic_DNA"/>
</dbReference>
<dbReference type="RefSeq" id="WP_011972240.1">
    <property type="nucleotide sequence ID" value="NC_009634.1"/>
</dbReference>
<dbReference type="SMR" id="A6UPB5"/>
<dbReference type="STRING" id="406327.Mevan_0429"/>
<dbReference type="GeneID" id="5325448"/>
<dbReference type="KEGG" id="mvn:Mevan_0429"/>
<dbReference type="eggNOG" id="arCOG04229">
    <property type="taxonomic scope" value="Archaea"/>
</dbReference>
<dbReference type="HOGENOM" id="CLU_128576_0_0_2"/>
<dbReference type="OrthoDB" id="7000at2157"/>
<dbReference type="Proteomes" id="UP000001107">
    <property type="component" value="Chromosome"/>
</dbReference>
<dbReference type="GO" id="GO:0009347">
    <property type="term" value="C:aspartate carbamoyltransferase complex"/>
    <property type="evidence" value="ECO:0007669"/>
    <property type="project" value="InterPro"/>
</dbReference>
<dbReference type="GO" id="GO:0046872">
    <property type="term" value="F:metal ion binding"/>
    <property type="evidence" value="ECO:0007669"/>
    <property type="project" value="UniProtKB-KW"/>
</dbReference>
<dbReference type="GO" id="GO:0006207">
    <property type="term" value="P:'de novo' pyrimidine nucleobase biosynthetic process"/>
    <property type="evidence" value="ECO:0007669"/>
    <property type="project" value="InterPro"/>
</dbReference>
<dbReference type="GO" id="GO:0006221">
    <property type="term" value="P:pyrimidine nucleotide biosynthetic process"/>
    <property type="evidence" value="ECO:0007669"/>
    <property type="project" value="UniProtKB-UniRule"/>
</dbReference>
<dbReference type="Gene3D" id="2.30.30.20">
    <property type="entry name" value="Aspartate carbamoyltransferase regulatory subunit, C-terminal domain"/>
    <property type="match status" value="1"/>
</dbReference>
<dbReference type="Gene3D" id="3.30.70.140">
    <property type="entry name" value="Aspartate carbamoyltransferase regulatory subunit, N-terminal domain"/>
    <property type="match status" value="1"/>
</dbReference>
<dbReference type="HAMAP" id="MF_00002">
    <property type="entry name" value="Asp_carb_tr_reg"/>
    <property type="match status" value="1"/>
</dbReference>
<dbReference type="InterPro" id="IPR020545">
    <property type="entry name" value="Asp_carbamoyltransf_reg_N"/>
</dbReference>
<dbReference type="InterPro" id="IPR002801">
    <property type="entry name" value="Asp_carbamoylTrfase_reg"/>
</dbReference>
<dbReference type="InterPro" id="IPR020542">
    <property type="entry name" value="Asp_carbamoyltrfase_reg_C"/>
</dbReference>
<dbReference type="InterPro" id="IPR036792">
    <property type="entry name" value="Asp_carbatrfase_reg_C_sf"/>
</dbReference>
<dbReference type="InterPro" id="IPR036793">
    <property type="entry name" value="Asp_carbatrfase_reg_N_sf"/>
</dbReference>
<dbReference type="NCBIfam" id="TIGR00240">
    <property type="entry name" value="ATCase_reg"/>
    <property type="match status" value="1"/>
</dbReference>
<dbReference type="PANTHER" id="PTHR35805">
    <property type="entry name" value="ASPARTATE CARBAMOYLTRANSFERASE REGULATORY CHAIN"/>
    <property type="match status" value="1"/>
</dbReference>
<dbReference type="PANTHER" id="PTHR35805:SF1">
    <property type="entry name" value="ASPARTATE CARBAMOYLTRANSFERASE REGULATORY CHAIN"/>
    <property type="match status" value="1"/>
</dbReference>
<dbReference type="Pfam" id="PF01948">
    <property type="entry name" value="PyrI"/>
    <property type="match status" value="1"/>
</dbReference>
<dbReference type="Pfam" id="PF02748">
    <property type="entry name" value="PyrI_C"/>
    <property type="match status" value="1"/>
</dbReference>
<dbReference type="SUPFAM" id="SSF57825">
    <property type="entry name" value="Aspartate carbamoyltransferase, Regulatory-chain, C-terminal domain"/>
    <property type="match status" value="1"/>
</dbReference>
<dbReference type="SUPFAM" id="SSF54893">
    <property type="entry name" value="Aspartate carbamoyltransferase, Regulatory-chain, N-terminal domain"/>
    <property type="match status" value="1"/>
</dbReference>
<gene>
    <name evidence="1" type="primary">pyrI</name>
    <name type="ordered locus">Mevan_0429</name>
</gene>
<keyword id="KW-0479">Metal-binding</keyword>
<keyword id="KW-0665">Pyrimidine biosynthesis</keyword>
<keyword id="KW-0862">Zinc</keyword>
<feature type="chain" id="PRO_1000000042" description="Aspartate carbamoyltransferase regulatory chain">
    <location>
        <begin position="1"/>
        <end position="148"/>
    </location>
</feature>
<feature type="binding site" evidence="1">
    <location>
        <position position="106"/>
    </location>
    <ligand>
        <name>Zn(2+)</name>
        <dbReference type="ChEBI" id="CHEBI:29105"/>
    </ligand>
</feature>
<feature type="binding site" evidence="1">
    <location>
        <position position="111"/>
    </location>
    <ligand>
        <name>Zn(2+)</name>
        <dbReference type="ChEBI" id="CHEBI:29105"/>
    </ligand>
</feature>
<feature type="binding site" evidence="1">
    <location>
        <position position="134"/>
    </location>
    <ligand>
        <name>Zn(2+)</name>
        <dbReference type="ChEBI" id="CHEBI:29105"/>
    </ligand>
</feature>
<feature type="binding site" evidence="1">
    <location>
        <position position="137"/>
    </location>
    <ligand>
        <name>Zn(2+)</name>
        <dbReference type="ChEBI" id="CHEBI:29105"/>
    </ligand>
</feature>
<organism>
    <name type="scientific">Methanococcus vannielii (strain ATCC 35089 / DSM 1224 / JCM 13029 / OCM 148 / SB)</name>
    <dbReference type="NCBI Taxonomy" id="406327"/>
    <lineage>
        <taxon>Archaea</taxon>
        <taxon>Methanobacteriati</taxon>
        <taxon>Methanobacteriota</taxon>
        <taxon>Methanomada group</taxon>
        <taxon>Methanococci</taxon>
        <taxon>Methanococcales</taxon>
        <taxon>Methanococcaceae</taxon>
        <taxon>Methanococcus</taxon>
    </lineage>
</organism>
<protein>
    <recommendedName>
        <fullName evidence="1">Aspartate carbamoyltransferase regulatory chain</fullName>
    </recommendedName>
</protein>
<name>PYRI_METVS</name>
<evidence type="ECO:0000255" key="1">
    <source>
        <dbReference type="HAMAP-Rule" id="MF_00002"/>
    </source>
</evidence>
<accession>A6UPB5</accession>
<reference key="1">
    <citation type="submission" date="2007-06" db="EMBL/GenBank/DDBJ databases">
        <title>Complete sequence of Methanococcus vannielii SB.</title>
        <authorList>
            <consortium name="US DOE Joint Genome Institute"/>
            <person name="Copeland A."/>
            <person name="Lucas S."/>
            <person name="Lapidus A."/>
            <person name="Barry K."/>
            <person name="Glavina del Rio T."/>
            <person name="Dalin E."/>
            <person name="Tice H."/>
            <person name="Pitluck S."/>
            <person name="Chain P."/>
            <person name="Malfatti S."/>
            <person name="Shin M."/>
            <person name="Vergez L."/>
            <person name="Schmutz J."/>
            <person name="Larimer F."/>
            <person name="Land M."/>
            <person name="Hauser L."/>
            <person name="Kyrpides N."/>
            <person name="Anderson I."/>
            <person name="Sieprawska-Lupa M."/>
            <person name="Whitman W.B."/>
            <person name="Richardson P."/>
        </authorList>
    </citation>
    <scope>NUCLEOTIDE SEQUENCE [LARGE SCALE GENOMIC DNA]</scope>
    <source>
        <strain>ATCC 35089 / DSM 1224 / JCM 13029 / OCM 148 / SB</strain>
    </source>
</reference>
<comment type="function">
    <text evidence="1">Involved in allosteric regulation of aspartate carbamoyltransferase.</text>
</comment>
<comment type="cofactor">
    <cofactor evidence="1">
        <name>Zn(2+)</name>
        <dbReference type="ChEBI" id="CHEBI:29105"/>
    </cofactor>
    <text evidence="1">Binds 1 zinc ion per subunit.</text>
</comment>
<comment type="subunit">
    <text evidence="1">Contains catalytic and regulatory chains.</text>
</comment>
<comment type="similarity">
    <text evidence="1">Belongs to the PyrI family.</text>
</comment>
<sequence length="148" mass="16297">MKVELKVKPIENGTVIDHIESSKALKVYDLLKINESMPVTLALNVSSKKGSLKDILKIEGLALSKADVNKIALVSPNATINIIKDGKVVSKFKVGIPNKIDGIVKCTNPNCITNKEGIKSKFTVEQKDTLKIRCDYCEKFINSIIISR</sequence>
<proteinExistence type="inferred from homology"/>